<gene>
    <name evidence="1" type="primary">pfkA</name>
    <name type="synonym">pfk</name>
    <name type="ordered locus">gbs0930</name>
</gene>
<keyword id="KW-0021">Allosteric enzyme</keyword>
<keyword id="KW-0067">ATP-binding</keyword>
<keyword id="KW-0963">Cytoplasm</keyword>
<keyword id="KW-0324">Glycolysis</keyword>
<keyword id="KW-0418">Kinase</keyword>
<keyword id="KW-0460">Magnesium</keyword>
<keyword id="KW-0479">Metal-binding</keyword>
<keyword id="KW-0547">Nucleotide-binding</keyword>
<keyword id="KW-0808">Transferase</keyword>
<name>PFKA_STRA3</name>
<comment type="function">
    <text evidence="1">Catalyzes the phosphorylation of D-fructose 6-phosphate to fructose 1,6-bisphosphate by ATP, the first committing step of glycolysis.</text>
</comment>
<comment type="catalytic activity">
    <reaction evidence="1">
        <text>beta-D-fructose 6-phosphate + ATP = beta-D-fructose 1,6-bisphosphate + ADP + H(+)</text>
        <dbReference type="Rhea" id="RHEA:16109"/>
        <dbReference type="ChEBI" id="CHEBI:15378"/>
        <dbReference type="ChEBI" id="CHEBI:30616"/>
        <dbReference type="ChEBI" id="CHEBI:32966"/>
        <dbReference type="ChEBI" id="CHEBI:57634"/>
        <dbReference type="ChEBI" id="CHEBI:456216"/>
        <dbReference type="EC" id="2.7.1.11"/>
    </reaction>
</comment>
<comment type="cofactor">
    <cofactor evidence="1">
        <name>Mg(2+)</name>
        <dbReference type="ChEBI" id="CHEBI:18420"/>
    </cofactor>
</comment>
<comment type="activity regulation">
    <text evidence="1">Allosterically activated by ADP and other diphosphonucleosides, and allosterically inhibited by phosphoenolpyruvate.</text>
</comment>
<comment type="pathway">
    <text evidence="1">Carbohydrate degradation; glycolysis; D-glyceraldehyde 3-phosphate and glycerone phosphate from D-glucose: step 3/4.</text>
</comment>
<comment type="subunit">
    <text evidence="1">Homotetramer.</text>
</comment>
<comment type="subcellular location">
    <subcellularLocation>
        <location evidence="1">Cytoplasm</location>
    </subcellularLocation>
</comment>
<comment type="similarity">
    <text evidence="1">Belongs to the phosphofructokinase type A (PFKA) family. ATP-dependent PFK group I subfamily. Prokaryotic clade 'B1' sub-subfamily.</text>
</comment>
<organism>
    <name type="scientific">Streptococcus agalactiae serotype III (strain NEM316)</name>
    <dbReference type="NCBI Taxonomy" id="211110"/>
    <lineage>
        <taxon>Bacteria</taxon>
        <taxon>Bacillati</taxon>
        <taxon>Bacillota</taxon>
        <taxon>Bacilli</taxon>
        <taxon>Lactobacillales</taxon>
        <taxon>Streptococcaceae</taxon>
        <taxon>Streptococcus</taxon>
    </lineage>
</organism>
<feature type="chain" id="PRO_0000111984" description="ATP-dependent 6-phosphofructokinase">
    <location>
        <begin position="1"/>
        <end position="340"/>
    </location>
</feature>
<feature type="active site" description="Proton acceptor" evidence="1">
    <location>
        <position position="127"/>
    </location>
</feature>
<feature type="binding site" evidence="1">
    <location>
        <position position="11"/>
    </location>
    <ligand>
        <name>ATP</name>
        <dbReference type="ChEBI" id="CHEBI:30616"/>
    </ligand>
</feature>
<feature type="binding site" evidence="1">
    <location>
        <begin position="21"/>
        <end position="25"/>
    </location>
    <ligand>
        <name>ADP</name>
        <dbReference type="ChEBI" id="CHEBI:456216"/>
        <note>allosteric activator; ligand shared between dimeric partners</note>
    </ligand>
</feature>
<feature type="binding site" evidence="1">
    <location>
        <begin position="72"/>
        <end position="73"/>
    </location>
    <ligand>
        <name>ATP</name>
        <dbReference type="ChEBI" id="CHEBI:30616"/>
    </ligand>
</feature>
<feature type="binding site" evidence="1">
    <location>
        <begin position="102"/>
        <end position="105"/>
    </location>
    <ligand>
        <name>ATP</name>
        <dbReference type="ChEBI" id="CHEBI:30616"/>
    </ligand>
</feature>
<feature type="binding site" evidence="1">
    <location>
        <position position="103"/>
    </location>
    <ligand>
        <name>Mg(2+)</name>
        <dbReference type="ChEBI" id="CHEBI:18420"/>
        <note>catalytic</note>
    </ligand>
</feature>
<feature type="binding site" description="in other chain" evidence="1">
    <location>
        <begin position="125"/>
        <end position="127"/>
    </location>
    <ligand>
        <name>substrate</name>
        <note>ligand shared between dimeric partners</note>
    </ligand>
</feature>
<feature type="binding site" description="in other chain" evidence="1">
    <location>
        <position position="154"/>
    </location>
    <ligand>
        <name>ADP</name>
        <dbReference type="ChEBI" id="CHEBI:456216"/>
        <note>allosteric activator; ligand shared between dimeric partners</note>
    </ligand>
</feature>
<feature type="binding site" evidence="1">
    <location>
        <position position="162"/>
    </location>
    <ligand>
        <name>substrate</name>
        <note>ligand shared between dimeric partners</note>
    </ligand>
</feature>
<feature type="binding site" description="in other chain" evidence="1">
    <location>
        <begin position="169"/>
        <end position="171"/>
    </location>
    <ligand>
        <name>substrate</name>
        <note>ligand shared between dimeric partners</note>
    </ligand>
</feature>
<feature type="binding site" description="in other chain" evidence="1">
    <location>
        <begin position="185"/>
        <end position="187"/>
    </location>
    <ligand>
        <name>ADP</name>
        <dbReference type="ChEBI" id="CHEBI:456216"/>
        <note>allosteric activator; ligand shared between dimeric partners</note>
    </ligand>
</feature>
<feature type="binding site" description="in other chain" evidence="1">
    <location>
        <begin position="213"/>
        <end position="215"/>
    </location>
    <ligand>
        <name>ADP</name>
        <dbReference type="ChEBI" id="CHEBI:456216"/>
        <note>allosteric activator; ligand shared between dimeric partners</note>
    </ligand>
</feature>
<feature type="binding site" description="in other chain" evidence="1">
    <location>
        <position position="222"/>
    </location>
    <ligand>
        <name>substrate</name>
        <note>ligand shared between dimeric partners</note>
    </ligand>
</feature>
<feature type="binding site" evidence="1">
    <location>
        <position position="244"/>
    </location>
    <ligand>
        <name>substrate</name>
        <note>ligand shared between dimeric partners</note>
    </ligand>
</feature>
<feature type="binding site" description="in other chain" evidence="1">
    <location>
        <begin position="250"/>
        <end position="253"/>
    </location>
    <ligand>
        <name>substrate</name>
        <note>ligand shared between dimeric partners</note>
    </ligand>
</feature>
<sequence length="340" mass="35969">MKRIAVLTSGGDAPGMNAAIRAVVRKAISEGMEVYGINQGYYGMVTGDIFPLDANSVGDTINRGGTFLRSARYPEFAELEGQLKGIEQLKKHGIEGVVVIGGDGSYHGAMRLTEHGFPAVGLPGTIDNDIVGTDYTIGFDTAVATAVENLDRLRDTSASHNRTFVVEVMGRNAGDIALWSGIAAGADQIIVPEEEFNIDEVVSNVRAGYAAGKHHQIIVLAEGVMSGDEFAKTMKAAGDDSDLRVTNLGHLLRGGSPTARDRVLASRMGAYAVQLLKEGRGGLAVGVHNEEMVESPILGLAEEGALFSLTDEGKIVVNNPHKADLRLAALNRDLANQSSK</sequence>
<evidence type="ECO:0000255" key="1">
    <source>
        <dbReference type="HAMAP-Rule" id="MF_00339"/>
    </source>
</evidence>
<proteinExistence type="inferred from homology"/>
<protein>
    <recommendedName>
        <fullName evidence="1">ATP-dependent 6-phosphofructokinase</fullName>
        <shortName evidence="1">ATP-PFK</shortName>
        <shortName evidence="1">Phosphofructokinase</shortName>
        <ecNumber evidence="1">2.7.1.11</ecNumber>
    </recommendedName>
    <alternativeName>
        <fullName evidence="1">Phosphohexokinase</fullName>
    </alternativeName>
</protein>
<accession>P65696</accession>
<accession>Q8E001</accession>
<accession>Q8E5Q1</accession>
<dbReference type="EC" id="2.7.1.11" evidence="1"/>
<dbReference type="EMBL" id="AL766848">
    <property type="protein sequence ID" value="CAD46589.1"/>
    <property type="molecule type" value="Genomic_DNA"/>
</dbReference>
<dbReference type="RefSeq" id="WP_000820831.1">
    <property type="nucleotide sequence ID" value="NC_004368.1"/>
</dbReference>
<dbReference type="SMR" id="P65696"/>
<dbReference type="KEGG" id="san:pfk"/>
<dbReference type="eggNOG" id="COG0205">
    <property type="taxonomic scope" value="Bacteria"/>
</dbReference>
<dbReference type="HOGENOM" id="CLU_020655_0_1_9"/>
<dbReference type="UniPathway" id="UPA00109">
    <property type="reaction ID" value="UER00182"/>
</dbReference>
<dbReference type="Proteomes" id="UP000000823">
    <property type="component" value="Chromosome"/>
</dbReference>
<dbReference type="GO" id="GO:0005945">
    <property type="term" value="C:6-phosphofructokinase complex"/>
    <property type="evidence" value="ECO:0007669"/>
    <property type="project" value="TreeGrafter"/>
</dbReference>
<dbReference type="GO" id="GO:0003872">
    <property type="term" value="F:6-phosphofructokinase activity"/>
    <property type="evidence" value="ECO:0007669"/>
    <property type="project" value="UniProtKB-UniRule"/>
</dbReference>
<dbReference type="GO" id="GO:0016208">
    <property type="term" value="F:AMP binding"/>
    <property type="evidence" value="ECO:0007669"/>
    <property type="project" value="TreeGrafter"/>
</dbReference>
<dbReference type="GO" id="GO:0005524">
    <property type="term" value="F:ATP binding"/>
    <property type="evidence" value="ECO:0007669"/>
    <property type="project" value="UniProtKB-KW"/>
</dbReference>
<dbReference type="GO" id="GO:0070095">
    <property type="term" value="F:fructose-6-phosphate binding"/>
    <property type="evidence" value="ECO:0007669"/>
    <property type="project" value="TreeGrafter"/>
</dbReference>
<dbReference type="GO" id="GO:0042802">
    <property type="term" value="F:identical protein binding"/>
    <property type="evidence" value="ECO:0007669"/>
    <property type="project" value="TreeGrafter"/>
</dbReference>
<dbReference type="GO" id="GO:0046872">
    <property type="term" value="F:metal ion binding"/>
    <property type="evidence" value="ECO:0007669"/>
    <property type="project" value="UniProtKB-KW"/>
</dbReference>
<dbReference type="GO" id="GO:0048029">
    <property type="term" value="F:monosaccharide binding"/>
    <property type="evidence" value="ECO:0007669"/>
    <property type="project" value="TreeGrafter"/>
</dbReference>
<dbReference type="GO" id="GO:0061621">
    <property type="term" value="P:canonical glycolysis"/>
    <property type="evidence" value="ECO:0007669"/>
    <property type="project" value="TreeGrafter"/>
</dbReference>
<dbReference type="GO" id="GO:0030388">
    <property type="term" value="P:fructose 1,6-bisphosphate metabolic process"/>
    <property type="evidence" value="ECO:0007669"/>
    <property type="project" value="TreeGrafter"/>
</dbReference>
<dbReference type="GO" id="GO:0006002">
    <property type="term" value="P:fructose 6-phosphate metabolic process"/>
    <property type="evidence" value="ECO:0007669"/>
    <property type="project" value="InterPro"/>
</dbReference>
<dbReference type="FunFam" id="3.40.50.450:FF:000001">
    <property type="entry name" value="ATP-dependent 6-phosphofructokinase"/>
    <property type="match status" value="1"/>
</dbReference>
<dbReference type="FunFam" id="3.40.50.460:FF:000002">
    <property type="entry name" value="ATP-dependent 6-phosphofructokinase"/>
    <property type="match status" value="1"/>
</dbReference>
<dbReference type="Gene3D" id="3.40.50.450">
    <property type="match status" value="1"/>
</dbReference>
<dbReference type="Gene3D" id="3.40.50.460">
    <property type="entry name" value="Phosphofructokinase domain"/>
    <property type="match status" value="1"/>
</dbReference>
<dbReference type="HAMAP" id="MF_00339">
    <property type="entry name" value="Phosphofructokinase_I_B1"/>
    <property type="match status" value="1"/>
</dbReference>
<dbReference type="InterPro" id="IPR022953">
    <property type="entry name" value="ATP_PFK"/>
</dbReference>
<dbReference type="InterPro" id="IPR012003">
    <property type="entry name" value="ATP_PFK_prok-type"/>
</dbReference>
<dbReference type="InterPro" id="IPR012828">
    <property type="entry name" value="PFKA_ATP_prok"/>
</dbReference>
<dbReference type="InterPro" id="IPR015912">
    <property type="entry name" value="Phosphofructokinase_CS"/>
</dbReference>
<dbReference type="InterPro" id="IPR000023">
    <property type="entry name" value="Phosphofructokinase_dom"/>
</dbReference>
<dbReference type="InterPro" id="IPR035966">
    <property type="entry name" value="PKF_sf"/>
</dbReference>
<dbReference type="NCBIfam" id="TIGR02482">
    <property type="entry name" value="PFKA_ATP"/>
    <property type="match status" value="1"/>
</dbReference>
<dbReference type="NCBIfam" id="NF002872">
    <property type="entry name" value="PRK03202.1"/>
    <property type="match status" value="1"/>
</dbReference>
<dbReference type="PANTHER" id="PTHR13697:SF4">
    <property type="entry name" value="ATP-DEPENDENT 6-PHOSPHOFRUCTOKINASE"/>
    <property type="match status" value="1"/>
</dbReference>
<dbReference type="PANTHER" id="PTHR13697">
    <property type="entry name" value="PHOSPHOFRUCTOKINASE"/>
    <property type="match status" value="1"/>
</dbReference>
<dbReference type="Pfam" id="PF00365">
    <property type="entry name" value="PFK"/>
    <property type="match status" value="1"/>
</dbReference>
<dbReference type="PIRSF" id="PIRSF000532">
    <property type="entry name" value="ATP_PFK_prok"/>
    <property type="match status" value="1"/>
</dbReference>
<dbReference type="PRINTS" id="PR00476">
    <property type="entry name" value="PHFRCTKINASE"/>
</dbReference>
<dbReference type="SUPFAM" id="SSF53784">
    <property type="entry name" value="Phosphofructokinase"/>
    <property type="match status" value="1"/>
</dbReference>
<dbReference type="PROSITE" id="PS00433">
    <property type="entry name" value="PHOSPHOFRUCTOKINASE"/>
    <property type="match status" value="1"/>
</dbReference>
<reference key="1">
    <citation type="journal article" date="2002" name="Mol. Microbiol.">
        <title>Genome sequence of Streptococcus agalactiae, a pathogen causing invasive neonatal disease.</title>
        <authorList>
            <person name="Glaser P."/>
            <person name="Rusniok C."/>
            <person name="Buchrieser C."/>
            <person name="Chevalier F."/>
            <person name="Frangeul L."/>
            <person name="Msadek T."/>
            <person name="Zouine M."/>
            <person name="Couve E."/>
            <person name="Lalioui L."/>
            <person name="Poyart C."/>
            <person name="Trieu-Cuot P."/>
            <person name="Kunst F."/>
        </authorList>
    </citation>
    <scope>NUCLEOTIDE SEQUENCE [LARGE SCALE GENOMIC DNA]</scope>
    <source>
        <strain>NEM316</strain>
    </source>
</reference>